<proteinExistence type="evidence at protein level"/>
<gene>
    <name evidence="17" type="primary">CHO2</name>
    <name evidence="16" type="synonym">PEM1</name>
    <name evidence="21" type="ordered locus">YGR157W</name>
    <name type="ORF">G6673</name>
</gene>
<keyword id="KW-0007">Acetylation</keyword>
<keyword id="KW-0256">Endoplasmic reticulum</keyword>
<keyword id="KW-0444">Lipid biosynthesis</keyword>
<keyword id="KW-0443">Lipid metabolism</keyword>
<keyword id="KW-0472">Membrane</keyword>
<keyword id="KW-0489">Methyltransferase</keyword>
<keyword id="KW-0594">Phospholipid biosynthesis</keyword>
<keyword id="KW-1208">Phospholipid metabolism</keyword>
<keyword id="KW-1185">Reference proteome</keyword>
<keyword id="KW-0949">S-adenosyl-L-methionine</keyword>
<keyword id="KW-0808">Transferase</keyword>
<keyword id="KW-0812">Transmembrane</keyword>
<keyword id="KW-1133">Transmembrane helix</keyword>
<organism>
    <name type="scientific">Saccharomyces cerevisiae (strain ATCC 204508 / S288c)</name>
    <name type="common">Baker's yeast</name>
    <dbReference type="NCBI Taxonomy" id="559292"/>
    <lineage>
        <taxon>Eukaryota</taxon>
        <taxon>Fungi</taxon>
        <taxon>Dikarya</taxon>
        <taxon>Ascomycota</taxon>
        <taxon>Saccharomycotina</taxon>
        <taxon>Saccharomycetes</taxon>
        <taxon>Saccharomycetales</taxon>
        <taxon>Saccharomycetaceae</taxon>
        <taxon>Saccharomyces</taxon>
    </lineage>
</organism>
<dbReference type="EC" id="2.1.1.17" evidence="1 8 9 10 11"/>
<dbReference type="EMBL" id="M16987">
    <property type="protein sequence ID" value="AAA34850.1"/>
    <property type="molecule type" value="Genomic_DNA"/>
</dbReference>
<dbReference type="EMBL" id="X85807">
    <property type="protein sequence ID" value="CAA59814.1"/>
    <property type="molecule type" value="Genomic_DNA"/>
</dbReference>
<dbReference type="EMBL" id="Z72942">
    <property type="protein sequence ID" value="CAA97171.1"/>
    <property type="molecule type" value="Genomic_DNA"/>
</dbReference>
<dbReference type="EMBL" id="BK006941">
    <property type="protein sequence ID" value="DAA08248.1"/>
    <property type="molecule type" value="Genomic_DNA"/>
</dbReference>
<dbReference type="PIR" id="A28443">
    <property type="entry name" value="A28443"/>
</dbReference>
<dbReference type="RefSeq" id="NP_011673.1">
    <property type="nucleotide sequence ID" value="NM_001181286.1"/>
</dbReference>
<dbReference type="BioGRID" id="33405">
    <property type="interactions" value="821"/>
</dbReference>
<dbReference type="DIP" id="DIP-8037N"/>
<dbReference type="FunCoup" id="P05374">
    <property type="interactions" value="113"/>
</dbReference>
<dbReference type="IntAct" id="P05374">
    <property type="interactions" value="4"/>
</dbReference>
<dbReference type="MINT" id="P05374"/>
<dbReference type="STRING" id="4932.YGR157W"/>
<dbReference type="SwissLipids" id="SLP:000000085"/>
<dbReference type="iPTMnet" id="P05374"/>
<dbReference type="PaxDb" id="4932-YGR157W"/>
<dbReference type="PeptideAtlas" id="P05374"/>
<dbReference type="EnsemblFungi" id="YGR157W_mRNA">
    <property type="protein sequence ID" value="YGR157W"/>
    <property type="gene ID" value="YGR157W"/>
</dbReference>
<dbReference type="GeneID" id="853061"/>
<dbReference type="KEGG" id="sce:YGR157W"/>
<dbReference type="AGR" id="SGD:S000003389"/>
<dbReference type="SGD" id="S000003389">
    <property type="gene designation" value="CHO2"/>
</dbReference>
<dbReference type="VEuPathDB" id="FungiDB:YGR157W"/>
<dbReference type="eggNOG" id="ENOG502QRGH">
    <property type="taxonomic scope" value="Eukaryota"/>
</dbReference>
<dbReference type="HOGENOM" id="CLU_005987_0_1_1"/>
<dbReference type="InParanoid" id="P05374"/>
<dbReference type="OMA" id="PPVTHDM"/>
<dbReference type="OrthoDB" id="4583at2759"/>
<dbReference type="BioCyc" id="MetaCyc:YGR157W-MONOMER"/>
<dbReference type="BioCyc" id="YEAST:YGR157W-MONOMER"/>
<dbReference type="UniPathway" id="UPA00753"/>
<dbReference type="BioGRID-ORCS" id="853061">
    <property type="hits" value="0 hits in 10 CRISPR screens"/>
</dbReference>
<dbReference type="PRO" id="PR:P05374"/>
<dbReference type="Proteomes" id="UP000002311">
    <property type="component" value="Chromosome VII"/>
</dbReference>
<dbReference type="RNAct" id="P05374">
    <property type="molecule type" value="protein"/>
</dbReference>
<dbReference type="GO" id="GO:0071944">
    <property type="term" value="C:cell periphery"/>
    <property type="evidence" value="ECO:0007005"/>
    <property type="project" value="SGD"/>
</dbReference>
<dbReference type="GO" id="GO:0005783">
    <property type="term" value="C:endoplasmic reticulum"/>
    <property type="evidence" value="ECO:0007005"/>
    <property type="project" value="SGD"/>
</dbReference>
<dbReference type="GO" id="GO:0005789">
    <property type="term" value="C:endoplasmic reticulum membrane"/>
    <property type="evidence" value="ECO:0007669"/>
    <property type="project" value="UniProtKB-SubCell"/>
</dbReference>
<dbReference type="GO" id="GO:0004608">
    <property type="term" value="F:phosphatidylethanolamine N-methyltransferase activity"/>
    <property type="evidence" value="ECO:0000314"/>
    <property type="project" value="SGD"/>
</dbReference>
<dbReference type="GO" id="GO:0032259">
    <property type="term" value="P:methylation"/>
    <property type="evidence" value="ECO:0007669"/>
    <property type="project" value="UniProtKB-KW"/>
</dbReference>
<dbReference type="GO" id="GO:0006656">
    <property type="term" value="P:phosphatidylcholine biosynthetic process"/>
    <property type="evidence" value="ECO:0000314"/>
    <property type="project" value="SGD"/>
</dbReference>
<dbReference type="FunFam" id="1.20.120.1630:FF:000016">
    <property type="entry name" value="Phosphatidylethanolamine N-methyltransferase"/>
    <property type="match status" value="1"/>
</dbReference>
<dbReference type="Gene3D" id="1.20.120.1630">
    <property type="match status" value="2"/>
</dbReference>
<dbReference type="Gene3D" id="2.60.40.2840">
    <property type="match status" value="1"/>
</dbReference>
<dbReference type="HAMAP" id="MF_03217">
    <property type="entry name" value="PEMT"/>
    <property type="match status" value="1"/>
</dbReference>
<dbReference type="InterPro" id="IPR007318">
    <property type="entry name" value="Phopholipid_MeTrfase"/>
</dbReference>
<dbReference type="InterPro" id="IPR016219">
    <property type="entry name" value="Phosphatid-EA_MeTrfase_fun"/>
</dbReference>
<dbReference type="PANTHER" id="PTHR32138">
    <property type="entry name" value="PHOSPHATIDYLETHANOLAMINE N-METHYLTRANSFERASE"/>
    <property type="match status" value="1"/>
</dbReference>
<dbReference type="PANTHER" id="PTHR32138:SF0">
    <property type="entry name" value="PHOSPHATIDYLETHANOLAMINE N-METHYLTRANSFERASE"/>
    <property type="match status" value="1"/>
</dbReference>
<dbReference type="Pfam" id="PF04191">
    <property type="entry name" value="PEMT"/>
    <property type="match status" value="2"/>
</dbReference>
<dbReference type="PIRSF" id="PIRSF000383">
    <property type="entry name" value="PEAMT"/>
    <property type="match status" value="1"/>
</dbReference>
<dbReference type="PROSITE" id="PS51598">
    <property type="entry name" value="SAM_CHO2"/>
    <property type="match status" value="1"/>
</dbReference>
<name>CHO2_YEAST</name>
<feature type="initiator methionine" description="Removed" evidence="22">
    <location>
        <position position="1"/>
    </location>
</feature>
<feature type="chain" id="PRO_0000058304" description="Phosphatidylethanolamine N-methyltransferase">
    <location>
        <begin position="2"/>
        <end position="869"/>
    </location>
</feature>
<feature type="topological domain" description="Lumenal" evidence="1 18">
    <location>
        <begin position="2"/>
        <end position="55"/>
    </location>
</feature>
<feature type="transmembrane region" description="Helical" evidence="1">
    <location>
        <begin position="56"/>
        <end position="76"/>
    </location>
</feature>
<feature type="topological domain" description="Cytoplasmic" evidence="1 18">
    <location>
        <begin position="77"/>
        <end position="86"/>
    </location>
</feature>
<feature type="transmembrane region" description="Helical" evidence="1">
    <location>
        <begin position="87"/>
        <end position="107"/>
    </location>
</feature>
<feature type="topological domain" description="Lumenal" evidence="1 18">
    <location>
        <begin position="108"/>
        <end position="187"/>
    </location>
</feature>
<feature type="transmembrane region" description="Helical" evidence="1">
    <location>
        <begin position="188"/>
        <end position="208"/>
    </location>
</feature>
<feature type="topological domain" description="Cytoplasmic" evidence="1 18">
    <location>
        <begin position="209"/>
        <end position="212"/>
    </location>
</feature>
<feature type="transmembrane region" description="Helical" evidence="1">
    <location>
        <begin position="213"/>
        <end position="233"/>
    </location>
</feature>
<feature type="topological domain" description="Lumenal" evidence="1 18">
    <location>
        <begin position="234"/>
        <end position="258"/>
    </location>
</feature>
<feature type="transmembrane region" description="Helical" evidence="1">
    <location>
        <begin position="259"/>
        <end position="279"/>
    </location>
</feature>
<feature type="topological domain" description="Cytoplasmic" evidence="1 18">
    <location>
        <begin position="280"/>
        <end position="291"/>
    </location>
</feature>
<feature type="transmembrane region" description="Helical" evidence="1">
    <location>
        <begin position="292"/>
        <end position="310"/>
    </location>
</feature>
<feature type="topological domain" description="Lumenal" evidence="1 18">
    <location>
        <begin position="311"/>
        <end position="362"/>
    </location>
</feature>
<feature type="transmembrane region" description="Helical" evidence="1">
    <location>
        <begin position="363"/>
        <end position="383"/>
    </location>
</feature>
<feature type="topological domain" description="Cytoplasmic" evidence="1 18">
    <location>
        <begin position="384"/>
        <end position="389"/>
    </location>
</feature>
<feature type="transmembrane region" description="Helical" evidence="1">
    <location>
        <begin position="390"/>
        <end position="410"/>
    </location>
</feature>
<feature type="topological domain" description="Lumenal" evidence="1 18">
    <location>
        <begin position="411"/>
        <end position="439"/>
    </location>
</feature>
<feature type="transmembrane region" description="Helical" evidence="1">
    <location>
        <begin position="440"/>
        <end position="460"/>
    </location>
</feature>
<feature type="topological domain" description="Cytoplasmic" evidence="1 18">
    <location>
        <begin position="461"/>
        <end position="463"/>
    </location>
</feature>
<feature type="transmembrane region" description="Helical" evidence="1">
    <location>
        <begin position="464"/>
        <end position="484"/>
    </location>
</feature>
<feature type="topological domain" description="Lumenal" evidence="1 18">
    <location>
        <begin position="485"/>
        <end position="534"/>
    </location>
</feature>
<feature type="transmembrane region" description="Helical" evidence="1">
    <location>
        <begin position="535"/>
        <end position="555"/>
    </location>
</feature>
<feature type="topological domain" description="Cytoplasmic" evidence="1 6">
    <location>
        <begin position="556"/>
        <end position="869"/>
    </location>
</feature>
<feature type="modified residue" description="N-acetylserine" evidence="22">
    <location>
        <position position="2"/>
    </location>
</feature>
<evidence type="ECO:0000255" key="1">
    <source>
        <dbReference type="HAMAP-Rule" id="MF_03217"/>
    </source>
</evidence>
<evidence type="ECO:0000269" key="2">
    <source>
    </source>
</evidence>
<evidence type="ECO:0000269" key="3">
    <source>
    </source>
</evidence>
<evidence type="ECO:0000269" key="4">
    <source>
    </source>
</evidence>
<evidence type="ECO:0000269" key="5">
    <source>
    </source>
</evidence>
<evidence type="ECO:0000269" key="6">
    <source>
    </source>
</evidence>
<evidence type="ECO:0000269" key="7">
    <source>
    </source>
</evidence>
<evidence type="ECO:0000269" key="8">
    <source>
    </source>
</evidence>
<evidence type="ECO:0000269" key="9">
    <source>
    </source>
</evidence>
<evidence type="ECO:0000269" key="10">
    <source>
    </source>
</evidence>
<evidence type="ECO:0000269" key="11">
    <source>
    </source>
</evidence>
<evidence type="ECO:0000269" key="12">
    <source>
    </source>
</evidence>
<evidence type="ECO:0000269" key="13">
    <source>
    </source>
</evidence>
<evidence type="ECO:0000269" key="14">
    <source>
    </source>
</evidence>
<evidence type="ECO:0000303" key="15">
    <source>
    </source>
</evidence>
<evidence type="ECO:0000303" key="16">
    <source>
    </source>
</evidence>
<evidence type="ECO:0000303" key="17">
    <source>
    </source>
</evidence>
<evidence type="ECO:0000305" key="18">
    <source>
    </source>
</evidence>
<evidence type="ECO:0000305" key="19">
    <source>
    </source>
</evidence>
<evidence type="ECO:0000305" key="20">
    <source>
    </source>
</evidence>
<evidence type="ECO:0000312" key="21">
    <source>
        <dbReference type="SGD" id="S000003389"/>
    </source>
</evidence>
<evidence type="ECO:0007744" key="22">
    <source>
    </source>
</evidence>
<sequence>MSSCKTTLSEMVGSVTKDRGTINVEARTRSSNVTFKPPVTHDMVRSLFDPTLKKSLLEKCIALAIISNFFICYWVFQRFGLQFTKYFFLVQYLFWRIAYNLGIGLVLHYQSHYETLTNCAKTHAIFSKIPQNKDANSNFSTNSNSFSEKFWNFIRKFCQYEIRSKMPKEYDLFAYPEEINVWLIFRQFVDLILMQDFVTYIIYVYLSIPYSWVQIFNWRSLLGVILILFNIWVKLDAHRVVKDYAWYWGDFFFLEESELIFDGVFNISPHPMYSIGYLGYYGLSLICNDYKVLLVSVFGHYSQFLFLKYVENPHIERTYGDGTDSDSQMNSRIDDLISKENYDYSRPLINMGLSFNNFNKLRFTDYFTIGTVAALMLGTIMNARFINLNYLFITVFVTKLVSWLFISTILYKQSQSKWFTRLFLENGYTQVYSYEQWQFIYNYYLVLTYTLMIIHTGLQIWSNFSNINNSQLIFGLILVALQTWCDKETRLAISDFGWFYGDFFLSNYISTRKLTSQGIYRYLNHPEAVLGVVGVWGTVLMTNFAVTNIILAVLWTLTNFILVKFIETPHVNKIYGKTKRVSGVGKTLLGLKPLRQVSDIVNRIENIIIKSLVDESKNSNGGAELLPKNYQDNKEWNILIQEAMDSVATRLSPYCELKIENEQVETNFVLPTPVTLNWKMPIELYNGDDWIGLYKVIDTRADREKTRVGSGGHWSATSKDSYMNHGLRHKESVTEIKATEKYVQGKVTFDTSLLYFENGIYEFRYHSGNSHKVLLISTPFEISLPVLNTTTPELFEKDLTEFLTKVNVLKDGKFRPLGNKFFGMDSLKQLIKNSIGVELSSEYMRRVNGDAHVISHRAWDIKQTLDSLA</sequence>
<accession>P05374</accession>
<accession>D6VUT7</accession>
<protein>
    <recommendedName>
        <fullName evidence="1 16">Phosphatidylethanolamine N-methyltransferase</fullName>
        <shortName evidence="1 16">PE methyltransferase</shortName>
        <shortName evidence="1">PEAMT</shortName>
        <shortName evidence="1 15">PEMT</shortName>
        <ecNumber evidence="1 8 9 10 11">2.1.1.17</ecNumber>
    </recommendedName>
    <alternativeName>
        <fullName evidence="20">Choline-requiring protein 2</fullName>
    </alternativeName>
</protein>
<reference key="1">
    <citation type="journal article" date="1987" name="J. Biol. Chem.">
        <title>Yeast phosphatidylethanolamine methylation pathway. Cloning and characterization of two distinct methyltransferase genes.</title>
        <authorList>
            <person name="Kodaki T."/>
            <person name="Yamashita S."/>
        </authorList>
    </citation>
    <scope>NUCLEOTIDE SEQUENCE [GENOMIC DNA]</scope>
    <scope>FUNCTION</scope>
    <scope>CATALYTIC ACTIVITY</scope>
    <scope>PATHWAY</scope>
</reference>
<reference key="2">
    <citation type="journal article" date="1995" name="Yeast">
        <title>The sequence of a 27 kb segment on the right arm of chromosome VII from Saccharomyces cerevisiae reveals MOL1, NAT2, RPL30B, RSR1, CYS4, PEM1/CHO2, NSR1 genes and ten new open reading frames.</title>
        <authorList>
            <person name="Skala J."/>
            <person name="Nawrocki A."/>
            <person name="Goffeau A."/>
        </authorList>
    </citation>
    <scope>NUCLEOTIDE SEQUENCE [GENOMIC DNA]</scope>
    <source>
        <strain>ATCC 204508 / S288c</strain>
    </source>
</reference>
<reference key="3">
    <citation type="journal article" date="1997" name="Nature">
        <title>The nucleotide sequence of Saccharomyces cerevisiae chromosome VII.</title>
        <authorList>
            <person name="Tettelin H."/>
            <person name="Agostoni-Carbone M.L."/>
            <person name="Albermann K."/>
            <person name="Albers M."/>
            <person name="Arroyo J."/>
            <person name="Backes U."/>
            <person name="Barreiros T."/>
            <person name="Bertani I."/>
            <person name="Bjourson A.J."/>
            <person name="Brueckner M."/>
            <person name="Bruschi C.V."/>
            <person name="Carignani G."/>
            <person name="Castagnoli L."/>
            <person name="Cerdan E."/>
            <person name="Clemente M.L."/>
            <person name="Coblenz A."/>
            <person name="Coglievina M."/>
            <person name="Coissac E."/>
            <person name="Defoor E."/>
            <person name="Del Bino S."/>
            <person name="Delius H."/>
            <person name="Delneri D."/>
            <person name="de Wergifosse P."/>
            <person name="Dujon B."/>
            <person name="Durand P."/>
            <person name="Entian K.-D."/>
            <person name="Eraso P."/>
            <person name="Escribano V."/>
            <person name="Fabiani L."/>
            <person name="Fartmann B."/>
            <person name="Feroli F."/>
            <person name="Feuermann M."/>
            <person name="Frontali L."/>
            <person name="Garcia-Gonzalez M."/>
            <person name="Garcia-Saez M.I."/>
            <person name="Goffeau A."/>
            <person name="Guerreiro P."/>
            <person name="Hani J."/>
            <person name="Hansen M."/>
            <person name="Hebling U."/>
            <person name="Hernandez K."/>
            <person name="Heumann K."/>
            <person name="Hilger F."/>
            <person name="Hofmann B."/>
            <person name="Indge K.J."/>
            <person name="James C.M."/>
            <person name="Klima R."/>
            <person name="Koetter P."/>
            <person name="Kramer B."/>
            <person name="Kramer W."/>
            <person name="Lauquin G."/>
            <person name="Leuther H."/>
            <person name="Louis E.J."/>
            <person name="Maillier E."/>
            <person name="Marconi A."/>
            <person name="Martegani E."/>
            <person name="Mazon M.J."/>
            <person name="Mazzoni C."/>
            <person name="McReynolds A.D.K."/>
            <person name="Melchioretto P."/>
            <person name="Mewes H.-W."/>
            <person name="Minenkova O."/>
            <person name="Mueller-Auer S."/>
            <person name="Nawrocki A."/>
            <person name="Netter P."/>
            <person name="Neu R."/>
            <person name="Nombela C."/>
            <person name="Oliver S.G."/>
            <person name="Panzeri L."/>
            <person name="Paoluzi S."/>
            <person name="Plevani P."/>
            <person name="Portetelle D."/>
            <person name="Portillo F."/>
            <person name="Potier S."/>
            <person name="Purnelle B."/>
            <person name="Rieger M."/>
            <person name="Riles L."/>
            <person name="Rinaldi T."/>
            <person name="Robben J."/>
            <person name="Rodrigues-Pousada C."/>
            <person name="Rodriguez-Belmonte E."/>
            <person name="Rodriguez-Torres A.M."/>
            <person name="Rose M."/>
            <person name="Ruzzi M."/>
            <person name="Saliola M."/>
            <person name="Sanchez-Perez M."/>
            <person name="Schaefer B."/>
            <person name="Schaefer M."/>
            <person name="Scharfe M."/>
            <person name="Schmidheini T."/>
            <person name="Schreer A."/>
            <person name="Skala J."/>
            <person name="Souciet J.-L."/>
            <person name="Steensma H.Y."/>
            <person name="Talla E."/>
            <person name="Thierry A."/>
            <person name="Vandenbol M."/>
            <person name="van der Aart Q.J.M."/>
            <person name="Van Dyck L."/>
            <person name="Vanoni M."/>
            <person name="Verhasselt P."/>
            <person name="Voet M."/>
            <person name="Volckaert G."/>
            <person name="Wambutt R."/>
            <person name="Watson M.D."/>
            <person name="Weber N."/>
            <person name="Wedler E."/>
            <person name="Wedler H."/>
            <person name="Wipfli P."/>
            <person name="Wolf K."/>
            <person name="Wright L.F."/>
            <person name="Zaccaria P."/>
            <person name="Zimmermann M."/>
            <person name="Zollner A."/>
            <person name="Kleine K."/>
        </authorList>
    </citation>
    <scope>NUCLEOTIDE SEQUENCE [LARGE SCALE GENOMIC DNA]</scope>
    <source>
        <strain>ATCC 204508 / S288c</strain>
    </source>
</reference>
<reference key="4">
    <citation type="journal article" date="2014" name="G3 (Bethesda)">
        <title>The reference genome sequence of Saccharomyces cerevisiae: Then and now.</title>
        <authorList>
            <person name="Engel S.R."/>
            <person name="Dietrich F.S."/>
            <person name="Fisk D.G."/>
            <person name="Binkley G."/>
            <person name="Balakrishnan R."/>
            <person name="Costanzo M.C."/>
            <person name="Dwight S.S."/>
            <person name="Hitz B.C."/>
            <person name="Karra K."/>
            <person name="Nash R.S."/>
            <person name="Weng S."/>
            <person name="Wong E.D."/>
            <person name="Lloyd P."/>
            <person name="Skrzypek M.S."/>
            <person name="Miyasato S.R."/>
            <person name="Simison M."/>
            <person name="Cherry J.M."/>
        </authorList>
    </citation>
    <scope>GENOME REANNOTATION</scope>
    <source>
        <strain>ATCC 204508 / S288c</strain>
    </source>
</reference>
<reference key="5">
    <citation type="journal article" date="1980" name="Eur. J. Biochem.">
        <title>Regulation of phosphatidylethanolamine methyltransferase level by myo-inositol in Saccharomyces cerevisiae.</title>
        <authorList>
            <person name="Yamashita S."/>
            <person name="Oshima A."/>
        </authorList>
    </citation>
    <scope>FUNCTION</scope>
    <scope>INDUCTION</scope>
</reference>
<reference key="6">
    <citation type="journal article" date="1982" name="Eur. J. Biochem.">
        <title>Regulation of the phosphatidylethanolamine methylation pathway in Saccharomyces cerevisiae.</title>
        <authorList>
            <person name="Yamashita S."/>
            <person name="Oshima A."/>
            <person name="Nikawa J."/>
            <person name="Hosaka K."/>
        </authorList>
    </citation>
    <scope>FUNCTION</scope>
    <scope>INDUCTION</scope>
</reference>
<reference key="7">
    <citation type="journal article" date="1988" name="Genetics">
        <title>Saccharomyces cerevisiae cho2 mutants are deficient in phospholipid methylation and cross-pathway regulation of inositol synthesis.</title>
        <authorList>
            <person name="Summers E.F."/>
            <person name="Letts V.A."/>
            <person name="McGraw P."/>
            <person name="Henry S.A."/>
        </authorList>
    </citation>
    <scope>FUNCTION</scope>
    <scope>PATHWAY</scope>
</reference>
<reference key="8">
    <citation type="journal article" date="1989" name="Eur. J. Biochem.">
        <title>Characterization of the methyltransferases in the yeast phosphatidylethanolamine methylation pathway by selective gene disruption.</title>
        <authorList>
            <person name="Kodaki T."/>
            <person name="Yamashita S."/>
        </authorList>
    </citation>
    <scope>FUNCTION</scope>
    <scope>CATALYTIC ACTIVITY</scope>
    <scope>BIOPHYSICOCHEMICAL PROPERTIES</scope>
</reference>
<reference key="9">
    <citation type="journal article" date="1990" name="Biochim. Biophys. Acta">
        <title>Phosphatidylethanolamine methyltransferase and phospholipid methyltransferase activities from Saccharomyces cerevisiae. Enzymological and kinetic properties.</title>
        <authorList>
            <person name="Gaynor P.M."/>
            <person name="Carman G.M."/>
        </authorList>
    </citation>
    <scope>CATALYTIC ACTIVITY</scope>
    <scope>BIOPHYSICOCHEMICAL PROPERTIES</scope>
    <scope>FUNCTION</scope>
</reference>
<reference key="10">
    <citation type="journal article" date="1991" name="Biochim. Biophys. Acta">
        <title>Regulation of phosphatidylethanolamine methyltransferase and phospholipid methyltransferase by phospholipid precursors in Saccharomyces cerevisiae.</title>
        <authorList>
            <person name="Gaynor P.M."/>
            <person name="Gill T."/>
            <person name="Toutenhoofd S."/>
            <person name="Summers E.F."/>
            <person name="McGraw P."/>
            <person name="Homann M.J."/>
            <person name="Henry S.A."/>
            <person name="Carman G.M."/>
        </authorList>
    </citation>
    <scope>INDUCTION</scope>
</reference>
<reference key="11">
    <citation type="journal article" date="1991" name="J. Biochem.">
        <title>Identification of the upstream activation sequences responsible for the expression and regulation of the PEM1 and PEM2 genes encoding the enzymes of the phosphatidylethanolamine methylation pathway in Saccharomyces cerevisiae.</title>
        <authorList>
            <person name="Kodaki T."/>
            <person name="Hosaka K."/>
            <person name="Nikawa J."/>
            <person name="Yamashita S."/>
        </authorList>
    </citation>
    <scope>INDUCTION</scope>
</reference>
<reference key="12">
    <citation type="journal article" date="2003" name="Nature">
        <title>Global analysis of protein localization in budding yeast.</title>
        <authorList>
            <person name="Huh W.-K."/>
            <person name="Falvo J.V."/>
            <person name="Gerke L.C."/>
            <person name="Carroll A.S."/>
            <person name="Howson R.W."/>
            <person name="Weissman J.S."/>
            <person name="O'Shea E.K."/>
        </authorList>
    </citation>
    <scope>SUBCELLULAR LOCATION [LARGE SCALE ANALYSIS]</scope>
</reference>
<reference key="13">
    <citation type="journal article" date="2003" name="Nature">
        <title>Global analysis of protein expression in yeast.</title>
        <authorList>
            <person name="Ghaemmaghami S."/>
            <person name="Huh W.-K."/>
            <person name="Bower K."/>
            <person name="Howson R.W."/>
            <person name="Belle A."/>
            <person name="Dephoure N."/>
            <person name="O'Shea E.K."/>
            <person name="Weissman J.S."/>
        </authorList>
    </citation>
    <scope>LEVEL OF PROTEIN EXPRESSION [LARGE SCALE ANALYSIS]</scope>
</reference>
<reference key="14">
    <citation type="journal article" date="2004" name="J. Biol. Chem.">
        <title>The yeast phospholipid N-methyltransferases catalyzing the synthesis of phosphatidylcholine preferentially convert di-C16:1 substrates both in vivo and in vitro.</title>
        <authorList>
            <person name="Boumann H.A."/>
            <person name="Chin P.T."/>
            <person name="Heck A.J."/>
            <person name="De Kruijff B."/>
            <person name="De Kroon A.I."/>
        </authorList>
    </citation>
    <scope>FUNCTION</scope>
</reference>
<reference key="15">
    <citation type="journal article" date="2006" name="Proc. Natl. Acad. Sci. U.S.A.">
        <title>A global topology map of the Saccharomyces cerevisiae membrane proteome.</title>
        <authorList>
            <person name="Kim H."/>
            <person name="Melen K."/>
            <person name="Oesterberg M."/>
            <person name="von Heijne G."/>
        </authorList>
    </citation>
    <scope>TOPOLOGY [LARGE SCALE ANALYSIS]</scope>
    <source>
        <strain>ATCC 208353 / W303-1A</strain>
    </source>
</reference>
<reference key="16">
    <citation type="journal article" date="2009" name="Science">
        <title>Global analysis of Cdk1 substrate phosphorylation sites provides insights into evolution.</title>
        <authorList>
            <person name="Holt L.J."/>
            <person name="Tuch B.B."/>
            <person name="Villen J."/>
            <person name="Johnson A.D."/>
            <person name="Gygi S.P."/>
            <person name="Morgan D.O."/>
        </authorList>
    </citation>
    <scope>IDENTIFICATION BY MASS SPECTROMETRY [LARGE SCALE ANALYSIS]</scope>
</reference>
<reference key="17">
    <citation type="journal article" date="2011" name="Biochim. Biophys. Acta">
        <title>Quantitative profiling of PE, MMPE, DMPE, and PC lipid species by multiple precursor ion scanning: a tool for monitoring PE metabolism.</title>
        <authorList>
            <person name="Bilgin M."/>
            <person name="Markgraf D.F."/>
            <person name="Duchoslav E."/>
            <person name="Knudsen J."/>
            <person name="Jensen O.N."/>
            <person name="de Kroon A.I."/>
            <person name="Ejsing C.S."/>
        </authorList>
    </citation>
    <scope>FUNCTION</scope>
    <scope>CATALYTIC ACTIVITY</scope>
</reference>
<reference key="18">
    <citation type="journal article" date="2012" name="Proc. Natl. Acad. Sci. U.S.A.">
        <title>N-terminal acetylome analyses and functional insights of the N-terminal acetyltransferase NatB.</title>
        <authorList>
            <person name="Van Damme P."/>
            <person name="Lasa M."/>
            <person name="Polevoda B."/>
            <person name="Gazquez C."/>
            <person name="Elosegui-Artola A."/>
            <person name="Kim D.S."/>
            <person name="De Juan-Pardo E."/>
            <person name="Demeyer K."/>
            <person name="Hole K."/>
            <person name="Larrea E."/>
            <person name="Timmerman E."/>
            <person name="Prieto J."/>
            <person name="Arnesen T."/>
            <person name="Sherman F."/>
            <person name="Gevaert K."/>
            <person name="Aldabe R."/>
        </authorList>
    </citation>
    <scope>ACETYLATION [LARGE SCALE ANALYSIS] AT SER-2</scope>
    <scope>CLEAVAGE OF INITIATOR METHIONINE [LARGE SCALE ANALYSIS]</scope>
    <scope>IDENTIFICATION BY MASS SPECTROMETRY [LARGE SCALE ANALYSIS]</scope>
</reference>
<comment type="function">
    <text evidence="1 4 8 9 10 11 12 13 14">Catalyzes the first step of the methylation pathway of phosphatidylcholine biosynthesis, the SAM-dependent methylation of phosphatidylethanolamine (PE) to phosphatidylmonomethylethanolamine (PMME). Preferentially converts di-C16:1 substrates.</text>
</comment>
<comment type="catalytic activity">
    <reaction evidence="1 8 9 10 11">
        <text>a 1,2-diacyl-sn-glycero-3-phosphoethanolamine + S-adenosyl-L-methionine = a 1,2-diacyl-sn-glycero-3-phospho-N-methylethanolamine + S-adenosyl-L-homocysteine + H(+)</text>
        <dbReference type="Rhea" id="RHEA:11164"/>
        <dbReference type="ChEBI" id="CHEBI:15378"/>
        <dbReference type="ChEBI" id="CHEBI:57856"/>
        <dbReference type="ChEBI" id="CHEBI:59789"/>
        <dbReference type="ChEBI" id="CHEBI:64573"/>
        <dbReference type="ChEBI" id="CHEBI:64612"/>
        <dbReference type="EC" id="2.1.1.17"/>
    </reaction>
</comment>
<comment type="biophysicochemical properties">
    <kinetics>
        <KM evidence="11">60 uM for S-adenosyl-L-methionine</KM>
        <KM evidence="8">110 uM for S-adenosyl-L-methionine</KM>
        <KM evidence="8">57 uM for phosphatidylethanolamine (PE)</KM>
    </kinetics>
    <phDependence>
        <text evidence="11">Optimum pH is 9.9.</text>
    </phDependence>
</comment>
<comment type="pathway">
    <text evidence="1 19 20">Phospholipid metabolism; phosphatidylcholine biosynthesis.</text>
</comment>
<comment type="subcellular location">
    <subcellularLocation>
        <location evidence="1 2">Endoplasmic reticulum membrane</location>
        <topology evidence="1">Multi-pass membrane protein</topology>
    </subcellularLocation>
</comment>
<comment type="induction">
    <text evidence="5 7 13 14">Repressed by myo-inositol and choline.</text>
</comment>
<comment type="miscellaneous">
    <text evidence="3">Present with 1810 molecules/cell in log phase SD medium.</text>
</comment>
<comment type="similarity">
    <text evidence="1">Belongs to the class VI-like SAM-binding methyltransferase superfamily. CHO2 family.</text>
</comment>